<gene>
    <name type="primary">SAP1</name>
    <name type="ordered locus">YER047C</name>
</gene>
<accession>P39955</accession>
<accession>D3DLU8</accession>
<dbReference type="EMBL" id="U18796">
    <property type="protein sequence ID" value="AAB64582.1"/>
    <property type="molecule type" value="Genomic_DNA"/>
</dbReference>
<dbReference type="EMBL" id="BK006939">
    <property type="protein sequence ID" value="DAA07702.1"/>
    <property type="molecule type" value="Genomic_DNA"/>
</dbReference>
<dbReference type="PIR" id="S50550">
    <property type="entry name" value="S50550"/>
</dbReference>
<dbReference type="RefSeq" id="NP_010966.1">
    <property type="nucleotide sequence ID" value="NM_001178938.1"/>
</dbReference>
<dbReference type="SMR" id="P39955"/>
<dbReference type="BioGRID" id="36784">
    <property type="interactions" value="103"/>
</dbReference>
<dbReference type="DIP" id="DIP-1550N"/>
<dbReference type="ELM" id="P39955"/>
<dbReference type="FunCoup" id="P39955">
    <property type="interactions" value="138"/>
</dbReference>
<dbReference type="IntAct" id="P39955">
    <property type="interactions" value="22"/>
</dbReference>
<dbReference type="MINT" id="P39955"/>
<dbReference type="STRING" id="4932.YER047C"/>
<dbReference type="CarbonylDB" id="P39955"/>
<dbReference type="iPTMnet" id="P39955"/>
<dbReference type="PaxDb" id="4932-YER047C"/>
<dbReference type="PeptideAtlas" id="P39955"/>
<dbReference type="TopDownProteomics" id="P39955"/>
<dbReference type="EnsemblFungi" id="YER047C_mRNA">
    <property type="protein sequence ID" value="YER047C"/>
    <property type="gene ID" value="YER047C"/>
</dbReference>
<dbReference type="GeneID" id="856771"/>
<dbReference type="KEGG" id="sce:YER047C"/>
<dbReference type="AGR" id="SGD:S000000849"/>
<dbReference type="SGD" id="S000000849">
    <property type="gene designation" value="SAP1"/>
</dbReference>
<dbReference type="VEuPathDB" id="FungiDB:YER047C"/>
<dbReference type="eggNOG" id="KOG0740">
    <property type="taxonomic scope" value="Eukaryota"/>
</dbReference>
<dbReference type="GeneTree" id="ENSGT00940000176549"/>
<dbReference type="HOGENOM" id="CLU_000688_15_2_1"/>
<dbReference type="InParanoid" id="P39955"/>
<dbReference type="OMA" id="FAEIVVH"/>
<dbReference type="OrthoDB" id="10251136at2759"/>
<dbReference type="BioCyc" id="YEAST:G3O-30226-MONOMER"/>
<dbReference type="BioGRID-ORCS" id="856771">
    <property type="hits" value="2 hits in 10 CRISPR screens"/>
</dbReference>
<dbReference type="PRO" id="PR:P39955"/>
<dbReference type="Proteomes" id="UP000002311">
    <property type="component" value="Chromosome V"/>
</dbReference>
<dbReference type="RNAct" id="P39955">
    <property type="molecule type" value="protein"/>
</dbReference>
<dbReference type="GO" id="GO:0005737">
    <property type="term" value="C:cytoplasm"/>
    <property type="evidence" value="ECO:0007005"/>
    <property type="project" value="SGD"/>
</dbReference>
<dbReference type="GO" id="GO:0005524">
    <property type="term" value="F:ATP binding"/>
    <property type="evidence" value="ECO:0007669"/>
    <property type="project" value="UniProtKB-KW"/>
</dbReference>
<dbReference type="GO" id="GO:0016887">
    <property type="term" value="F:ATP hydrolysis activity"/>
    <property type="evidence" value="ECO:0000247"/>
    <property type="project" value="SGD"/>
</dbReference>
<dbReference type="CDD" id="cd19509">
    <property type="entry name" value="RecA-like_VPS4-like"/>
    <property type="match status" value="1"/>
</dbReference>
<dbReference type="FunFam" id="1.10.8.60:FF:000022">
    <property type="entry name" value="Fidgetin like 1"/>
    <property type="match status" value="1"/>
</dbReference>
<dbReference type="FunFam" id="3.40.50.300:FF:000093">
    <property type="entry name" value="Fidgetin-like 1"/>
    <property type="match status" value="1"/>
</dbReference>
<dbReference type="Gene3D" id="1.10.8.60">
    <property type="match status" value="1"/>
</dbReference>
<dbReference type="Gene3D" id="3.40.50.300">
    <property type="entry name" value="P-loop containing nucleotide triphosphate hydrolases"/>
    <property type="match status" value="1"/>
</dbReference>
<dbReference type="InterPro" id="IPR003593">
    <property type="entry name" value="AAA+_ATPase"/>
</dbReference>
<dbReference type="InterPro" id="IPR041569">
    <property type="entry name" value="AAA_lid_3"/>
</dbReference>
<dbReference type="InterPro" id="IPR003959">
    <property type="entry name" value="ATPase_AAA_core"/>
</dbReference>
<dbReference type="InterPro" id="IPR003960">
    <property type="entry name" value="ATPase_AAA_CS"/>
</dbReference>
<dbReference type="InterPro" id="IPR050304">
    <property type="entry name" value="MT-severing_AAA_ATPase"/>
</dbReference>
<dbReference type="InterPro" id="IPR027417">
    <property type="entry name" value="P-loop_NTPase"/>
</dbReference>
<dbReference type="InterPro" id="IPR015415">
    <property type="entry name" value="Spast_Vps4_C"/>
</dbReference>
<dbReference type="PANTHER" id="PTHR23074">
    <property type="entry name" value="AAA DOMAIN-CONTAINING"/>
    <property type="match status" value="1"/>
</dbReference>
<dbReference type="PANTHER" id="PTHR23074:SF17">
    <property type="entry name" value="FIDGETIN-LIKE PROTEIN 1"/>
    <property type="match status" value="1"/>
</dbReference>
<dbReference type="Pfam" id="PF00004">
    <property type="entry name" value="AAA"/>
    <property type="match status" value="1"/>
</dbReference>
<dbReference type="Pfam" id="PF17862">
    <property type="entry name" value="AAA_lid_3"/>
    <property type="match status" value="1"/>
</dbReference>
<dbReference type="Pfam" id="PF09336">
    <property type="entry name" value="Vps4_C"/>
    <property type="match status" value="1"/>
</dbReference>
<dbReference type="SMART" id="SM00382">
    <property type="entry name" value="AAA"/>
    <property type="match status" value="1"/>
</dbReference>
<dbReference type="SUPFAM" id="SSF52540">
    <property type="entry name" value="P-loop containing nucleoside triphosphate hydrolases"/>
    <property type="match status" value="1"/>
</dbReference>
<dbReference type="PROSITE" id="PS00674">
    <property type="entry name" value="AAA"/>
    <property type="match status" value="1"/>
</dbReference>
<keyword id="KW-0067">ATP-binding</keyword>
<keyword id="KW-0547">Nucleotide-binding</keyword>
<keyword id="KW-0597">Phosphoprotein</keyword>
<keyword id="KW-1185">Reference proteome</keyword>
<organism>
    <name type="scientific">Saccharomyces cerevisiae (strain ATCC 204508 / S288c)</name>
    <name type="common">Baker's yeast</name>
    <dbReference type="NCBI Taxonomy" id="559292"/>
    <lineage>
        <taxon>Eukaryota</taxon>
        <taxon>Fungi</taxon>
        <taxon>Dikarya</taxon>
        <taxon>Ascomycota</taxon>
        <taxon>Saccharomycotina</taxon>
        <taxon>Saccharomycetes</taxon>
        <taxon>Saccharomycetales</taxon>
        <taxon>Saccharomycetaceae</taxon>
        <taxon>Saccharomyces</taxon>
    </lineage>
</organism>
<name>SAP1_YEAST</name>
<sequence length="897" mass="100332">MDSQRSHHILTRLTKIRRRPQQPLTDFTELYSRIANETIYYLNLEEKKRYKEALQGWKALTTDVLFKQTLIEHNYPNTQSYTKDEVSLQNGIRELYHKSVMHLKRVKKLVREEPAPRNDMPSSKTYTNHSSSFTRSTEPPPVFQMVPGRMMKTLRNRNACGYKTAYSNPSLSSYGNSTSIKRGEDAENIRVNFVPSKPLSNNASRQHKNPIEHNDPPLKKETELYSDKYISEPILIDLTNDEDDHDVGILKGHNVFDEEESDGFEFDVSDYYDNFSEVDVEEEEEEKEERRRIKTLEAIQQQMSDLSVTSSTSSNKSVSSSENVPGSCIQSLPTTAPALPSLPPPPLLNVDRASSTGALKPHSLETSTTMDSSKIRNPQISKLMKNNHVPYLKGTKSTPTLITKSTPTFITRSKSNTKPIIKSNASSPTSSLTVPNSVIQKPKTAAMAAKRVLNSKKVASNPALNTTKKSHPILKSKTAKVPNSSSKKTSSHPSRPVSNSKPYSHGASQNKKPSKNQTTSMSKTNRKIPAQKKIGSPKIEDVGTEDATEHATSLNEQREEPEIDKKVLREILEDEIIDSLQGVDRQAAKQIFAEIVVHGDEVHWDDIAGLESAKYSLKEAVVYPFLRPDLFRGLREPVRGMLLFGPPGTGKTMLARAVATESHSTFFSISASSLTSKYLGESEKLVRALFAIAKKLSPSIIFVDEIDSIMGSRNNENENESSRRIKNEFLVQWSSLSSAAAGSNKSNTNNSDTNGDEDDTRVLVLAATNLPWSIDEAARRRFVRRQYIPLPEDQTRHVQFKKLLSHQKHTLTESDFDELVKITEGYSGSDITSLAKDAAMGPLRDLGDKLLETEREMIRPIGLVDFKNSLVYIKPSVSQDGLVKYEKWASQFGSSGS</sequence>
<evidence type="ECO:0000255" key="1"/>
<evidence type="ECO:0000256" key="2">
    <source>
        <dbReference type="SAM" id="MobiDB-lite"/>
    </source>
</evidence>
<evidence type="ECO:0000269" key="3">
    <source>
    </source>
</evidence>
<evidence type="ECO:0000305" key="4"/>
<evidence type="ECO:0007744" key="5">
    <source>
    </source>
</evidence>
<feature type="chain" id="PRO_0000084761" description="Protein SAP1">
    <location>
        <begin position="1"/>
        <end position="897"/>
    </location>
</feature>
<feature type="region of interest" description="Disordered" evidence="2">
    <location>
        <begin position="112"/>
        <end position="144"/>
    </location>
</feature>
<feature type="region of interest" description="Disordered" evidence="2">
    <location>
        <begin position="195"/>
        <end position="219"/>
    </location>
</feature>
<feature type="region of interest" description="Disordered" evidence="2">
    <location>
        <begin position="302"/>
        <end position="398"/>
    </location>
</feature>
<feature type="region of interest" description="Disordered" evidence="2">
    <location>
        <begin position="413"/>
        <end position="438"/>
    </location>
</feature>
<feature type="region of interest" description="Disordered" evidence="2">
    <location>
        <begin position="456"/>
        <end position="561"/>
    </location>
</feature>
<feature type="compositionally biased region" description="Polar residues" evidence="2">
    <location>
        <begin position="120"/>
        <end position="137"/>
    </location>
</feature>
<feature type="compositionally biased region" description="Basic and acidic residues" evidence="2">
    <location>
        <begin position="209"/>
        <end position="219"/>
    </location>
</feature>
<feature type="compositionally biased region" description="Low complexity" evidence="2">
    <location>
        <begin position="307"/>
        <end position="321"/>
    </location>
</feature>
<feature type="compositionally biased region" description="Polar residues" evidence="2">
    <location>
        <begin position="364"/>
        <end position="380"/>
    </location>
</feature>
<feature type="compositionally biased region" description="Basic residues" evidence="2">
    <location>
        <begin position="468"/>
        <end position="478"/>
    </location>
</feature>
<feature type="compositionally biased region" description="Low complexity" evidence="2">
    <location>
        <begin position="480"/>
        <end position="496"/>
    </location>
</feature>
<feature type="compositionally biased region" description="Polar residues" evidence="2">
    <location>
        <begin position="497"/>
        <end position="523"/>
    </location>
</feature>
<feature type="binding site" evidence="1">
    <location>
        <begin position="645"/>
        <end position="652"/>
    </location>
    <ligand>
        <name>ATP</name>
        <dbReference type="ChEBI" id="CHEBI:30616"/>
    </ligand>
</feature>
<feature type="modified residue" description="Phosphoserine" evidence="5">
    <location>
        <position position="536"/>
    </location>
</feature>
<comment type="subunit">
    <text>Interacts with SPT2/SIN1.</text>
</comment>
<comment type="interaction">
    <interactant intactId="EBI-16463">
        <id>P39955</id>
    </interactant>
    <interactant intactId="EBI-5412">
        <id>Q05080</id>
        <label>HOF1</label>
    </interactant>
    <organismsDiffer>false</organismsDiffer>
    <experiments>4</experiments>
</comment>
<comment type="interaction">
    <interactant intactId="EBI-16463">
        <id>P39955</id>
    </interactant>
    <interactant intactId="EBI-11670">
        <id>P36006</id>
        <label>MYO3</label>
    </interactant>
    <organismsDiffer>false</organismsDiffer>
    <experiments>3</experiments>
</comment>
<comment type="interaction">
    <interactant intactId="EBI-16463">
        <id>P39955</id>
    </interactant>
    <interactant intactId="EBI-11687">
        <id>Q04439</id>
        <label>MYO5</label>
    </interactant>
    <organismsDiffer>false</organismsDiffer>
    <experiments>4</experiments>
</comment>
<comment type="miscellaneous">
    <text evidence="3">Present with 300 molecules/cell in log phase SD medium.</text>
</comment>
<comment type="similarity">
    <text evidence="4">Belongs to the AAA ATPase family.</text>
</comment>
<protein>
    <recommendedName>
        <fullName>Protein SAP1</fullName>
    </recommendedName>
    <alternativeName>
        <fullName>SIN1-associated protein</fullName>
    </alternativeName>
</protein>
<proteinExistence type="evidence at protein level"/>
<reference key="1">
    <citation type="journal article" date="1997" name="Nature">
        <title>The nucleotide sequence of Saccharomyces cerevisiae chromosome V.</title>
        <authorList>
            <person name="Dietrich F.S."/>
            <person name="Mulligan J.T."/>
            <person name="Hennessy K.M."/>
            <person name="Yelton M.A."/>
            <person name="Allen E."/>
            <person name="Araujo R."/>
            <person name="Aviles E."/>
            <person name="Berno A."/>
            <person name="Brennan T."/>
            <person name="Carpenter J."/>
            <person name="Chen E."/>
            <person name="Cherry J.M."/>
            <person name="Chung E."/>
            <person name="Duncan M."/>
            <person name="Guzman E."/>
            <person name="Hartzell G."/>
            <person name="Hunicke-Smith S."/>
            <person name="Hyman R.W."/>
            <person name="Kayser A."/>
            <person name="Komp C."/>
            <person name="Lashkari D."/>
            <person name="Lew H."/>
            <person name="Lin D."/>
            <person name="Mosedale D."/>
            <person name="Nakahara K."/>
            <person name="Namath A."/>
            <person name="Norgren R."/>
            <person name="Oefner P."/>
            <person name="Oh C."/>
            <person name="Petel F.X."/>
            <person name="Roberts D."/>
            <person name="Sehl P."/>
            <person name="Schramm S."/>
            <person name="Shogren T."/>
            <person name="Smith V."/>
            <person name="Taylor P."/>
            <person name="Wei Y."/>
            <person name="Botstein D."/>
            <person name="Davis R.W."/>
        </authorList>
    </citation>
    <scope>NUCLEOTIDE SEQUENCE [LARGE SCALE GENOMIC DNA]</scope>
    <source>
        <strain>ATCC 204508 / S288c</strain>
    </source>
</reference>
<reference key="2">
    <citation type="journal article" date="2014" name="G3 (Bethesda)">
        <title>The reference genome sequence of Saccharomyces cerevisiae: Then and now.</title>
        <authorList>
            <person name="Engel S.R."/>
            <person name="Dietrich F.S."/>
            <person name="Fisk D.G."/>
            <person name="Binkley G."/>
            <person name="Balakrishnan R."/>
            <person name="Costanzo M.C."/>
            <person name="Dwight S.S."/>
            <person name="Hitz B.C."/>
            <person name="Karra K."/>
            <person name="Nash R.S."/>
            <person name="Weng S."/>
            <person name="Wong E.D."/>
            <person name="Lloyd P."/>
            <person name="Skrzypek M.S."/>
            <person name="Miyasato S.R."/>
            <person name="Simison M."/>
            <person name="Cherry J.M."/>
        </authorList>
    </citation>
    <scope>GENOME REANNOTATION</scope>
    <source>
        <strain>ATCC 204508 / S288c</strain>
    </source>
</reference>
<reference key="3">
    <citation type="journal article" date="1996" name="FEBS Lett.">
        <title>Association of yeast SAP1, a novel member of the 'AAA' ATPase family of proteins, with the chromatin protein SIN1.</title>
        <authorList>
            <person name="Liberzon A."/>
            <person name="Shpungin S."/>
            <person name="Bangio H."/>
            <person name="Yona E."/>
            <person name="Katcoff D.J."/>
        </authorList>
    </citation>
    <scope>CHARACTERIZATION</scope>
</reference>
<reference key="4">
    <citation type="journal article" date="2003" name="Nature">
        <title>Global analysis of protein expression in yeast.</title>
        <authorList>
            <person name="Ghaemmaghami S."/>
            <person name="Huh W.-K."/>
            <person name="Bower K."/>
            <person name="Howson R.W."/>
            <person name="Belle A."/>
            <person name="Dephoure N."/>
            <person name="O'Shea E.K."/>
            <person name="Weissman J.S."/>
        </authorList>
    </citation>
    <scope>LEVEL OF PROTEIN EXPRESSION [LARGE SCALE ANALYSIS]</scope>
</reference>
<reference key="5">
    <citation type="journal article" date="2007" name="J. Proteome Res.">
        <title>Large-scale phosphorylation analysis of alpha-factor-arrested Saccharomyces cerevisiae.</title>
        <authorList>
            <person name="Li X."/>
            <person name="Gerber S.A."/>
            <person name="Rudner A.D."/>
            <person name="Beausoleil S.A."/>
            <person name="Haas W."/>
            <person name="Villen J."/>
            <person name="Elias J.E."/>
            <person name="Gygi S.P."/>
        </authorList>
    </citation>
    <scope>IDENTIFICATION BY MASS SPECTROMETRY [LARGE SCALE ANALYSIS]</scope>
    <source>
        <strain>ADR376</strain>
    </source>
</reference>
<reference key="6">
    <citation type="journal article" date="2008" name="Mol. Cell. Proteomics">
        <title>A multidimensional chromatography technology for in-depth phosphoproteome analysis.</title>
        <authorList>
            <person name="Albuquerque C.P."/>
            <person name="Smolka M.B."/>
            <person name="Payne S.H."/>
            <person name="Bafna V."/>
            <person name="Eng J."/>
            <person name="Zhou H."/>
        </authorList>
    </citation>
    <scope>IDENTIFICATION BY MASS SPECTROMETRY [LARGE SCALE ANALYSIS]</scope>
</reference>
<reference key="7">
    <citation type="journal article" date="2009" name="Science">
        <title>Global analysis of Cdk1 substrate phosphorylation sites provides insights into evolution.</title>
        <authorList>
            <person name="Holt L.J."/>
            <person name="Tuch B.B."/>
            <person name="Villen J."/>
            <person name="Johnson A.D."/>
            <person name="Gygi S.P."/>
            <person name="Morgan D.O."/>
        </authorList>
    </citation>
    <scope>PHOSPHORYLATION [LARGE SCALE ANALYSIS] AT SER-536</scope>
    <scope>IDENTIFICATION BY MASS SPECTROMETRY [LARGE SCALE ANALYSIS]</scope>
</reference>